<proteinExistence type="inferred from homology"/>
<dbReference type="EC" id="4.3.2.10" evidence="1"/>
<dbReference type="EMBL" id="AE017333">
    <property type="protein sequence ID" value="AAU42551.1"/>
    <property type="molecule type" value="Genomic_DNA"/>
</dbReference>
<dbReference type="EMBL" id="CP000002">
    <property type="protein sequence ID" value="AAU25180.1"/>
    <property type="molecule type" value="Genomic_DNA"/>
</dbReference>
<dbReference type="RefSeq" id="WP_003185597.1">
    <property type="nucleotide sequence ID" value="NC_006322.1"/>
</dbReference>
<dbReference type="SMR" id="Q65EG3"/>
<dbReference type="STRING" id="279010.BL03412"/>
<dbReference type="GeneID" id="92859690"/>
<dbReference type="KEGG" id="bld:BLi03732"/>
<dbReference type="KEGG" id="bli:BL03412"/>
<dbReference type="PATRIC" id="fig|279010.13.peg.3798"/>
<dbReference type="eggNOG" id="COG0107">
    <property type="taxonomic scope" value="Bacteria"/>
</dbReference>
<dbReference type="HOGENOM" id="CLU_048577_4_0_9"/>
<dbReference type="UniPathway" id="UPA00031">
    <property type="reaction ID" value="UER00010"/>
</dbReference>
<dbReference type="Proteomes" id="UP000000606">
    <property type="component" value="Chromosome"/>
</dbReference>
<dbReference type="GO" id="GO:0005737">
    <property type="term" value="C:cytoplasm"/>
    <property type="evidence" value="ECO:0007669"/>
    <property type="project" value="UniProtKB-SubCell"/>
</dbReference>
<dbReference type="GO" id="GO:0000107">
    <property type="term" value="F:imidazoleglycerol-phosphate synthase activity"/>
    <property type="evidence" value="ECO:0007669"/>
    <property type="project" value="UniProtKB-UniRule"/>
</dbReference>
<dbReference type="GO" id="GO:0016829">
    <property type="term" value="F:lyase activity"/>
    <property type="evidence" value="ECO:0007669"/>
    <property type="project" value="UniProtKB-KW"/>
</dbReference>
<dbReference type="GO" id="GO:0000105">
    <property type="term" value="P:L-histidine biosynthetic process"/>
    <property type="evidence" value="ECO:0007669"/>
    <property type="project" value="UniProtKB-UniRule"/>
</dbReference>
<dbReference type="CDD" id="cd04731">
    <property type="entry name" value="HisF"/>
    <property type="match status" value="1"/>
</dbReference>
<dbReference type="FunFam" id="3.20.20.70:FF:000006">
    <property type="entry name" value="Imidazole glycerol phosphate synthase subunit HisF"/>
    <property type="match status" value="1"/>
</dbReference>
<dbReference type="Gene3D" id="3.20.20.70">
    <property type="entry name" value="Aldolase class I"/>
    <property type="match status" value="1"/>
</dbReference>
<dbReference type="HAMAP" id="MF_01013">
    <property type="entry name" value="HisF"/>
    <property type="match status" value="1"/>
</dbReference>
<dbReference type="InterPro" id="IPR013785">
    <property type="entry name" value="Aldolase_TIM"/>
</dbReference>
<dbReference type="InterPro" id="IPR006062">
    <property type="entry name" value="His_biosynth"/>
</dbReference>
<dbReference type="InterPro" id="IPR004651">
    <property type="entry name" value="HisF"/>
</dbReference>
<dbReference type="InterPro" id="IPR050064">
    <property type="entry name" value="IGPS_HisA/HisF"/>
</dbReference>
<dbReference type="InterPro" id="IPR011060">
    <property type="entry name" value="RibuloseP-bd_barrel"/>
</dbReference>
<dbReference type="NCBIfam" id="TIGR00735">
    <property type="entry name" value="hisF"/>
    <property type="match status" value="1"/>
</dbReference>
<dbReference type="PANTHER" id="PTHR21235:SF2">
    <property type="entry name" value="IMIDAZOLE GLYCEROL PHOSPHATE SYNTHASE HISHF"/>
    <property type="match status" value="1"/>
</dbReference>
<dbReference type="PANTHER" id="PTHR21235">
    <property type="entry name" value="IMIDAZOLE GLYCEROL PHOSPHATE SYNTHASE SUBUNIT HISF/H IGP SYNTHASE SUBUNIT HISF/H"/>
    <property type="match status" value="1"/>
</dbReference>
<dbReference type="Pfam" id="PF00977">
    <property type="entry name" value="His_biosynth"/>
    <property type="match status" value="1"/>
</dbReference>
<dbReference type="SUPFAM" id="SSF51366">
    <property type="entry name" value="Ribulose-phoshate binding barrel"/>
    <property type="match status" value="1"/>
</dbReference>
<name>HIS6_BACLD</name>
<feature type="chain" id="PRO_0000142117" description="Imidazole glycerol phosphate synthase subunit HisF">
    <location>
        <begin position="1"/>
        <end position="252"/>
    </location>
</feature>
<feature type="active site" evidence="1">
    <location>
        <position position="11"/>
    </location>
</feature>
<feature type="active site" evidence="1">
    <location>
        <position position="130"/>
    </location>
</feature>
<accession>Q65EG3</accession>
<accession>Q62PY1</accession>
<organism>
    <name type="scientific">Bacillus licheniformis (strain ATCC 14580 / DSM 13 / JCM 2505 / CCUG 7422 / NBRC 12200 / NCIMB 9375 / NCTC 10341 / NRRL NRS-1264 / Gibson 46)</name>
    <dbReference type="NCBI Taxonomy" id="279010"/>
    <lineage>
        <taxon>Bacteria</taxon>
        <taxon>Bacillati</taxon>
        <taxon>Bacillota</taxon>
        <taxon>Bacilli</taxon>
        <taxon>Bacillales</taxon>
        <taxon>Bacillaceae</taxon>
        <taxon>Bacillus</taxon>
    </lineage>
</organism>
<sequence length="252" mass="27266">MITKRIIPCLDVKDGRVVKGVQFVELKDAGDPVELAEVYDHEGADELVFLDISASHEGRKTMVDVVERVAAKLAIPFTVGGGINRLDDMKTILRAGADKVSVNTAAVLRPELITEGADFFGSQCIVVAIDAKYDPEADLYYVYTHGGRKKTNLEAVSWAKEAVRRGAGEILLTSMDSDGEKNGFDCRLTKLVSEAVSVPVIASGGAGRADHMYDAFAEGRADAALAASIFHYKETSVKEVKAYLKERGVNVR</sequence>
<reference key="1">
    <citation type="journal article" date="2004" name="J. Mol. Microbiol. Biotechnol.">
        <title>The complete genome sequence of Bacillus licheniformis DSM13, an organism with great industrial potential.</title>
        <authorList>
            <person name="Veith B."/>
            <person name="Herzberg C."/>
            <person name="Steckel S."/>
            <person name="Feesche J."/>
            <person name="Maurer K.H."/>
            <person name="Ehrenreich P."/>
            <person name="Baeumer S."/>
            <person name="Henne A."/>
            <person name="Liesegang H."/>
            <person name="Merkl R."/>
            <person name="Ehrenreich A."/>
            <person name="Gottschalk G."/>
        </authorList>
    </citation>
    <scope>NUCLEOTIDE SEQUENCE [LARGE SCALE GENOMIC DNA]</scope>
    <source>
        <strain>ATCC 14580 / DSM 13 / JCM 2505 / CCUG 7422 / NBRC 12200 / NCIMB 9375 / NCTC 10341 / NRRL NRS-1264 / Gibson 46</strain>
    </source>
</reference>
<reference key="2">
    <citation type="journal article" date="2004" name="Genome Biol.">
        <title>Complete genome sequence of the industrial bacterium Bacillus licheniformis and comparisons with closely related Bacillus species.</title>
        <authorList>
            <person name="Rey M.W."/>
            <person name="Ramaiya P."/>
            <person name="Nelson B.A."/>
            <person name="Brody-Karpin S.D."/>
            <person name="Zaretsky E.J."/>
            <person name="Tang M."/>
            <person name="Lopez de Leon A."/>
            <person name="Xiang H."/>
            <person name="Gusti V."/>
            <person name="Clausen I.G."/>
            <person name="Olsen P.B."/>
            <person name="Rasmussen M.D."/>
            <person name="Andersen J.T."/>
            <person name="Joergensen P.L."/>
            <person name="Larsen T.S."/>
            <person name="Sorokin A."/>
            <person name="Bolotin A."/>
            <person name="Lapidus A."/>
            <person name="Galleron N."/>
            <person name="Ehrlich S.D."/>
            <person name="Berka R.M."/>
        </authorList>
    </citation>
    <scope>NUCLEOTIDE SEQUENCE [LARGE SCALE GENOMIC DNA]</scope>
    <source>
        <strain>ATCC 14580 / DSM 13 / JCM 2505 / CCUG 7422 / NBRC 12200 / NCIMB 9375 / NCTC 10341 / NRRL NRS-1264 / Gibson 46</strain>
    </source>
</reference>
<comment type="function">
    <text evidence="1">IGPS catalyzes the conversion of PRFAR and glutamine to IGP, AICAR and glutamate. The HisF subunit catalyzes the cyclization activity that produces IGP and AICAR from PRFAR using the ammonia provided by the HisH subunit.</text>
</comment>
<comment type="catalytic activity">
    <reaction evidence="1">
        <text>5-[(5-phospho-1-deoxy-D-ribulos-1-ylimino)methylamino]-1-(5-phospho-beta-D-ribosyl)imidazole-4-carboxamide + L-glutamine = D-erythro-1-(imidazol-4-yl)glycerol 3-phosphate + 5-amino-1-(5-phospho-beta-D-ribosyl)imidazole-4-carboxamide + L-glutamate + H(+)</text>
        <dbReference type="Rhea" id="RHEA:24793"/>
        <dbReference type="ChEBI" id="CHEBI:15378"/>
        <dbReference type="ChEBI" id="CHEBI:29985"/>
        <dbReference type="ChEBI" id="CHEBI:58278"/>
        <dbReference type="ChEBI" id="CHEBI:58359"/>
        <dbReference type="ChEBI" id="CHEBI:58475"/>
        <dbReference type="ChEBI" id="CHEBI:58525"/>
        <dbReference type="EC" id="4.3.2.10"/>
    </reaction>
</comment>
<comment type="pathway">
    <text evidence="1">Amino-acid biosynthesis; L-histidine biosynthesis; L-histidine from 5-phospho-alpha-D-ribose 1-diphosphate: step 5/9.</text>
</comment>
<comment type="subunit">
    <text evidence="1">Heterodimer of HisH and HisF.</text>
</comment>
<comment type="subcellular location">
    <subcellularLocation>
        <location evidence="1">Cytoplasm</location>
    </subcellularLocation>
</comment>
<comment type="similarity">
    <text evidence="1">Belongs to the HisA/HisF family.</text>
</comment>
<protein>
    <recommendedName>
        <fullName evidence="1">Imidazole glycerol phosphate synthase subunit HisF</fullName>
        <ecNumber evidence="1">4.3.2.10</ecNumber>
    </recommendedName>
    <alternativeName>
        <fullName evidence="1">IGP synthase cyclase subunit</fullName>
    </alternativeName>
    <alternativeName>
        <fullName evidence="1">IGP synthase subunit HisF</fullName>
    </alternativeName>
    <alternativeName>
        <fullName evidence="1">ImGP synthase subunit HisF</fullName>
        <shortName evidence="1">IGPS subunit HisF</shortName>
    </alternativeName>
</protein>
<gene>
    <name evidence="1" type="primary">hisF</name>
    <name type="ordered locus">BLi03732</name>
    <name type="ordered locus">BL03412</name>
</gene>
<evidence type="ECO:0000255" key="1">
    <source>
        <dbReference type="HAMAP-Rule" id="MF_01013"/>
    </source>
</evidence>
<keyword id="KW-0028">Amino-acid biosynthesis</keyword>
<keyword id="KW-0963">Cytoplasm</keyword>
<keyword id="KW-0368">Histidine biosynthesis</keyword>
<keyword id="KW-0456">Lyase</keyword>
<keyword id="KW-1185">Reference proteome</keyword>